<dbReference type="EC" id="3.6.4.13" evidence="2"/>
<dbReference type="EMBL" id="CR858337">
    <property type="protein sequence ID" value="CAH90573.1"/>
    <property type="molecule type" value="mRNA"/>
</dbReference>
<dbReference type="EMBL" id="CR860693">
    <property type="protein sequence ID" value="CAH92809.1"/>
    <property type="molecule type" value="mRNA"/>
</dbReference>
<dbReference type="RefSeq" id="NP_001125306.1">
    <property type="nucleotide sequence ID" value="NM_001131834.1"/>
</dbReference>
<dbReference type="SMR" id="Q5R607"/>
<dbReference type="FunCoup" id="Q5R607">
    <property type="interactions" value="3491"/>
</dbReference>
<dbReference type="STRING" id="9601.ENSPPYP00000015564"/>
<dbReference type="GeneID" id="100172205"/>
<dbReference type="KEGG" id="pon:100172205"/>
<dbReference type="CTD" id="22907"/>
<dbReference type="eggNOG" id="KOG0920">
    <property type="taxonomic scope" value="Eukaryota"/>
</dbReference>
<dbReference type="InParanoid" id="Q5R607"/>
<dbReference type="OrthoDB" id="3363059at2759"/>
<dbReference type="Proteomes" id="UP000001595">
    <property type="component" value="Unplaced"/>
</dbReference>
<dbReference type="GO" id="GO:0005737">
    <property type="term" value="C:cytoplasm"/>
    <property type="evidence" value="ECO:0000250"/>
    <property type="project" value="UniProtKB"/>
</dbReference>
<dbReference type="GO" id="GO:0042645">
    <property type="term" value="C:mitochondrial nucleoid"/>
    <property type="evidence" value="ECO:0000250"/>
    <property type="project" value="UniProtKB"/>
</dbReference>
<dbReference type="GO" id="GO:0005739">
    <property type="term" value="C:mitochondrion"/>
    <property type="evidence" value="ECO:0000250"/>
    <property type="project" value="UniProtKB"/>
</dbReference>
<dbReference type="GO" id="GO:0005634">
    <property type="term" value="C:nucleus"/>
    <property type="evidence" value="ECO:0007669"/>
    <property type="project" value="TreeGrafter"/>
</dbReference>
<dbReference type="GO" id="GO:0035770">
    <property type="term" value="C:ribonucleoprotein granule"/>
    <property type="evidence" value="ECO:0000250"/>
    <property type="project" value="UniProtKB"/>
</dbReference>
<dbReference type="GO" id="GO:0005524">
    <property type="term" value="F:ATP binding"/>
    <property type="evidence" value="ECO:0007669"/>
    <property type="project" value="UniProtKB-KW"/>
</dbReference>
<dbReference type="GO" id="GO:0016887">
    <property type="term" value="F:ATP hydrolysis activity"/>
    <property type="evidence" value="ECO:0007669"/>
    <property type="project" value="RHEA"/>
</dbReference>
<dbReference type="GO" id="GO:0003682">
    <property type="term" value="F:chromatin binding"/>
    <property type="evidence" value="ECO:0000250"/>
    <property type="project" value="UniProtKB"/>
</dbReference>
<dbReference type="GO" id="GO:0003678">
    <property type="term" value="F:DNA helicase activity"/>
    <property type="evidence" value="ECO:0007669"/>
    <property type="project" value="TreeGrafter"/>
</dbReference>
<dbReference type="GO" id="GO:0002151">
    <property type="term" value="F:G-quadruplex RNA binding"/>
    <property type="evidence" value="ECO:0007669"/>
    <property type="project" value="TreeGrafter"/>
</dbReference>
<dbReference type="GO" id="GO:0003723">
    <property type="term" value="F:RNA binding"/>
    <property type="evidence" value="ECO:0000250"/>
    <property type="project" value="UniProtKB"/>
</dbReference>
<dbReference type="GO" id="GO:0003724">
    <property type="term" value="F:RNA helicase activity"/>
    <property type="evidence" value="ECO:0000250"/>
    <property type="project" value="UniProtKB"/>
</dbReference>
<dbReference type="GO" id="GO:0007417">
    <property type="term" value="P:central nervous system development"/>
    <property type="evidence" value="ECO:0000250"/>
    <property type="project" value="UniProtKB"/>
</dbReference>
<dbReference type="GO" id="GO:1902775">
    <property type="term" value="P:mitochondrial large ribosomal subunit assembly"/>
    <property type="evidence" value="ECO:0000250"/>
    <property type="project" value="UniProtKB"/>
</dbReference>
<dbReference type="CDD" id="cd17976">
    <property type="entry name" value="DEXHc_DHX30"/>
    <property type="match status" value="1"/>
</dbReference>
<dbReference type="CDD" id="cd18791">
    <property type="entry name" value="SF2_C_RHA"/>
    <property type="match status" value="1"/>
</dbReference>
<dbReference type="FunFam" id="1.20.120.1080:FF:000004">
    <property type="entry name" value="ATP-dependent RNA helicase DHX30 isoform X1"/>
    <property type="match status" value="1"/>
</dbReference>
<dbReference type="FunFam" id="3.30.160.20:FF:000016">
    <property type="entry name" value="ATP-dependent RNA helicase DHX30 isoform X1"/>
    <property type="match status" value="1"/>
</dbReference>
<dbReference type="FunFam" id="3.30.160.20:FF:000017">
    <property type="entry name" value="ATP-dependent RNA helicase DHX30 isoform X1"/>
    <property type="match status" value="1"/>
</dbReference>
<dbReference type="FunFam" id="3.40.50.300:FF:001703">
    <property type="entry name" value="DExH-box helicase 30"/>
    <property type="match status" value="1"/>
</dbReference>
<dbReference type="FunFam" id="3.40.50.300:FF:000375">
    <property type="entry name" value="Putative ATP-dependent RNA helicase DHX30"/>
    <property type="match status" value="1"/>
</dbReference>
<dbReference type="Gene3D" id="1.20.120.1080">
    <property type="match status" value="1"/>
</dbReference>
<dbReference type="Gene3D" id="3.30.160.20">
    <property type="match status" value="2"/>
</dbReference>
<dbReference type="Gene3D" id="3.40.50.300">
    <property type="entry name" value="P-loop containing nucleotide triphosphate hydrolases"/>
    <property type="match status" value="2"/>
</dbReference>
<dbReference type="InterPro" id="IPR011709">
    <property type="entry name" value="DEAD-box_helicase_OB_fold"/>
</dbReference>
<dbReference type="InterPro" id="IPR011545">
    <property type="entry name" value="DEAD/DEAH_box_helicase_dom"/>
</dbReference>
<dbReference type="InterPro" id="IPR002464">
    <property type="entry name" value="DNA/RNA_helicase_DEAH_CS"/>
</dbReference>
<dbReference type="InterPro" id="IPR056755">
    <property type="entry name" value="DSRM_2"/>
</dbReference>
<dbReference type="InterPro" id="IPR007502">
    <property type="entry name" value="Helicase-assoc_dom"/>
</dbReference>
<dbReference type="InterPro" id="IPR014001">
    <property type="entry name" value="Helicase_ATP-bd"/>
</dbReference>
<dbReference type="InterPro" id="IPR001650">
    <property type="entry name" value="Helicase_C-like"/>
</dbReference>
<dbReference type="InterPro" id="IPR027417">
    <property type="entry name" value="P-loop_NTPase"/>
</dbReference>
<dbReference type="PANTHER" id="PTHR18934">
    <property type="entry name" value="ATP-DEPENDENT RNA HELICASE"/>
    <property type="match status" value="1"/>
</dbReference>
<dbReference type="PANTHER" id="PTHR18934:SF257">
    <property type="entry name" value="ATP-DEPENDENT RNA HELICASE DHX30"/>
    <property type="match status" value="1"/>
</dbReference>
<dbReference type="Pfam" id="PF00270">
    <property type="entry name" value="DEAD"/>
    <property type="match status" value="1"/>
</dbReference>
<dbReference type="Pfam" id="PF24995">
    <property type="entry name" value="DSRM_2"/>
    <property type="match status" value="1"/>
</dbReference>
<dbReference type="Pfam" id="PF21010">
    <property type="entry name" value="HA2_C"/>
    <property type="match status" value="1"/>
</dbReference>
<dbReference type="Pfam" id="PF00271">
    <property type="entry name" value="Helicase_C"/>
    <property type="match status" value="1"/>
</dbReference>
<dbReference type="Pfam" id="PF07717">
    <property type="entry name" value="OB_NTP_bind"/>
    <property type="match status" value="1"/>
</dbReference>
<dbReference type="SMART" id="SM00487">
    <property type="entry name" value="DEXDc"/>
    <property type="match status" value="1"/>
</dbReference>
<dbReference type="SMART" id="SM00847">
    <property type="entry name" value="HA2"/>
    <property type="match status" value="1"/>
</dbReference>
<dbReference type="SMART" id="SM00490">
    <property type="entry name" value="HELICc"/>
    <property type="match status" value="1"/>
</dbReference>
<dbReference type="SUPFAM" id="SSF52540">
    <property type="entry name" value="P-loop containing nucleoside triphosphate hydrolases"/>
    <property type="match status" value="1"/>
</dbReference>
<dbReference type="PROSITE" id="PS00690">
    <property type="entry name" value="DEAH_ATP_HELICASE"/>
    <property type="match status" value="1"/>
</dbReference>
<dbReference type="PROSITE" id="PS51192">
    <property type="entry name" value="HELICASE_ATP_BIND_1"/>
    <property type="match status" value="1"/>
</dbReference>
<dbReference type="PROSITE" id="PS51194">
    <property type="entry name" value="HELICASE_CTER"/>
    <property type="match status" value="1"/>
</dbReference>
<comment type="function">
    <text evidence="1 2 3">RNA-dependent helicase. Plays an important role in the assembly of the mitochondrial large ribosomal subunit. Required for optimal function of the zinc-finger antiviral protein ZC3HAV1. Associates with mitochondrial DNA. Involved in nervous system development and differentiation through its involvement in the up-regulation of a number of genes which are required for neurogenesis, including GSC, NCAM1, neurogenin, and NEUROD.</text>
</comment>
<comment type="catalytic activity">
    <reaction evidence="2">
        <text>ATP + H2O = ADP + phosphate + H(+)</text>
        <dbReference type="Rhea" id="RHEA:13065"/>
        <dbReference type="ChEBI" id="CHEBI:15377"/>
        <dbReference type="ChEBI" id="CHEBI:15378"/>
        <dbReference type="ChEBI" id="CHEBI:30616"/>
        <dbReference type="ChEBI" id="CHEBI:43474"/>
        <dbReference type="ChEBI" id="CHEBI:456216"/>
        <dbReference type="EC" id="3.6.4.13"/>
    </reaction>
</comment>
<comment type="subunit">
    <text evidence="1 2">Identified in a complex with TFAM and SSBP1. Interacts (via N-terminus) with ZC3HAV1 (via N-terminal domain) in an RNA-independent manner. Found in a complex with GRSF1, DDX28, FASTKD2 and FASTKD5.</text>
</comment>
<comment type="subcellular location">
    <subcellularLocation>
        <location evidence="2">Cytoplasm</location>
    </subcellularLocation>
    <subcellularLocation>
        <location evidence="2">Mitochondrion</location>
    </subcellularLocation>
    <subcellularLocation>
        <location evidence="2">Mitochondrion matrix</location>
        <location evidence="2">Mitochondrion nucleoid</location>
    </subcellularLocation>
    <text evidence="2">Localizes to mitochondrial RNA granules found in close proximity to the mitochondrial nucleoids. Relocalizes to stress granules upon heat stress.</text>
</comment>
<comment type="alternative products">
    <event type="alternative splicing"/>
    <isoform>
        <id>Q5R607-1</id>
        <name>1</name>
        <sequence type="displayed"/>
    </isoform>
    <isoform>
        <id>Q5R607-2</id>
        <name>2</name>
        <sequence type="described" ref="VSP_019748"/>
    </isoform>
</comment>
<comment type="similarity">
    <text evidence="8">Belongs to the DEAD box helicase family. DEAH subfamily.</text>
</comment>
<sequence length="1194" mass="133924">MFSLDSFRKDRAQHRQRQCKLPPPRLPPMCVNPAPGGTISRASRDLLKEFPQPKNLLNSVIGRALGISHAKDKLVYVHTNGPKKKKVTLHIKWPKSVEVEGYGSKKIDAERQAAAAACQLFKGWGLLGPRNELFDAAKYRVLADRFGSPADSWWRPEPTMPPTSWRQLNPESIRPGGPGGLSRSLGREEEEDEEEELEEGTIDVTDFLSMTQQDSHTPLRDSRGSSFEMTDDDSAIRALTQFPLPKNLLAKVIQIATSSSTAKNLMQFHTVGTKTKLSTLTLLWPCPMTFVAKGRRKAEAENKAAALACKKLKSLGLVDRNNEPLTHAMYNLASLRELGETQRRPCTIQVPEPILRKIETFLNHYPVESSWIAPELRLQSDDILPLGKDSGPLSDPITGKPYVPLLEAEEVRLSQSLLELWRRRGPVWQEAPQLPVDPHRDTILNAIEQHPVVVISGDTGCGKTTRIPQLLLERYVTEGRGARCNVIITQPRRISAVSVAQRVSHELGPSLRRNVGFQVRLESKPPARGGALLFCTVGILLRKLQSNPSLEGVSHVIVDEVHERDVNTDFLLILLKGLQRLNPALRLVLMSATGDNERFSRYFGGCPVIKVPGFMYPVKEHYLEDILAKLGKHQYLHRHRHHESEDECALDLDLVTDLVLHIDARGEPGGILCFLPGWQEIKGVQQRLQEALGMHESKYLILPVHSNIPMMDQKAIFQQPPVGVRKIVLATNIAETSTTINDIVHVVDSGLHKEERYDLKTKVSCLETVWVSRANVIQRRGRAGRCQSGFAYHLFPRSRLEKMVPFQVPEILRTPLENLVLQAKIHMPEKTAVEFLSKAVDSPNIKAVDEAVILLQEIGVLDQREYLTTLGQRLAHISTEPRLAKAIVLAAIFRCLHPLLVVVSCLTRDPFSSSLQNRAEVDKVKALLSHDSGSDHLAFVRAVAGWEEVLRWQDRSSRENYLEENLLYAPSLRFIHGLIKQFSENIYEAFLVGKPSDCTLASAQCNEYSEEEELVKGVLMAGLYPNLIQVRQGKVTRQGKFKPNSVTYRTKSGNILLHKSTINREATRLRSRWLTYFMAVKSNGSVFVRDSSQVHPLAVLLLTDGDVHIRDDGRRATISLSDSDLLRLEGDSRTVRLLKELRRALGRMVERSLRSELAALPPSVQEEHGQLLALLAELLRGPCGSFDVRKTADD</sequence>
<organism>
    <name type="scientific">Pongo abelii</name>
    <name type="common">Sumatran orangutan</name>
    <name type="synonym">Pongo pygmaeus abelii</name>
    <dbReference type="NCBI Taxonomy" id="9601"/>
    <lineage>
        <taxon>Eukaryota</taxon>
        <taxon>Metazoa</taxon>
        <taxon>Chordata</taxon>
        <taxon>Craniata</taxon>
        <taxon>Vertebrata</taxon>
        <taxon>Euteleostomi</taxon>
        <taxon>Mammalia</taxon>
        <taxon>Eutheria</taxon>
        <taxon>Euarchontoglires</taxon>
        <taxon>Primates</taxon>
        <taxon>Haplorrhini</taxon>
        <taxon>Catarrhini</taxon>
        <taxon>Hominidae</taxon>
        <taxon>Pongo</taxon>
    </lineage>
</organism>
<name>DHX30_PONAB</name>
<evidence type="ECO:0000250" key="1">
    <source>
        <dbReference type="UniProtKB" id="Q5BJS0"/>
    </source>
</evidence>
<evidence type="ECO:0000250" key="2">
    <source>
        <dbReference type="UniProtKB" id="Q7L2E3"/>
    </source>
</evidence>
<evidence type="ECO:0000250" key="3">
    <source>
        <dbReference type="UniProtKB" id="Q99PU8"/>
    </source>
</evidence>
<evidence type="ECO:0000255" key="4">
    <source>
        <dbReference type="PROSITE-ProRule" id="PRU00541"/>
    </source>
</evidence>
<evidence type="ECO:0000255" key="5">
    <source>
        <dbReference type="PROSITE-ProRule" id="PRU00542"/>
    </source>
</evidence>
<evidence type="ECO:0000256" key="6">
    <source>
        <dbReference type="SAM" id="MobiDB-lite"/>
    </source>
</evidence>
<evidence type="ECO:0000303" key="7">
    <source ref="1"/>
</evidence>
<evidence type="ECO:0000305" key="8"/>
<gene>
    <name type="primary">DHX30</name>
</gene>
<proteinExistence type="evidence at transcript level"/>
<accession>Q5R607</accession>
<accession>Q5RCD4</accession>
<keyword id="KW-0025">Alternative splicing</keyword>
<keyword id="KW-0067">ATP-binding</keyword>
<keyword id="KW-0963">Cytoplasm</keyword>
<keyword id="KW-0347">Helicase</keyword>
<keyword id="KW-0378">Hydrolase</keyword>
<keyword id="KW-0496">Mitochondrion</keyword>
<keyword id="KW-1135">Mitochondrion nucleoid</keyword>
<keyword id="KW-0547">Nucleotide-binding</keyword>
<keyword id="KW-0597">Phosphoprotein</keyword>
<keyword id="KW-1185">Reference proteome</keyword>
<keyword id="KW-0690">Ribosome biogenesis</keyword>
<keyword id="KW-0694">RNA-binding</keyword>
<protein>
    <recommendedName>
        <fullName evidence="8">ATP-dependent RNA helicase DHX30</fullName>
        <ecNumber evidence="2">3.6.4.13</ecNumber>
    </recommendedName>
    <alternativeName>
        <fullName>DEAH box protein 30</fullName>
    </alternativeName>
</protein>
<feature type="chain" id="PRO_0000245540" description="ATP-dependent RNA helicase DHX30">
    <location>
        <begin position="1"/>
        <end position="1194"/>
    </location>
</feature>
<feature type="domain" description="DRBM">
    <location>
        <begin position="53"/>
        <end position="121"/>
    </location>
</feature>
<feature type="domain" description="Helicase ATP-binding" evidence="4">
    <location>
        <begin position="444"/>
        <end position="612"/>
    </location>
</feature>
<feature type="domain" description="Helicase C-terminal" evidence="5">
    <location>
        <begin position="654"/>
        <end position="827"/>
    </location>
</feature>
<feature type="region of interest" description="Disordered" evidence="6">
    <location>
        <begin position="1"/>
        <end position="27"/>
    </location>
</feature>
<feature type="region of interest" description="Disordered" evidence="6">
    <location>
        <begin position="150"/>
        <end position="199"/>
    </location>
</feature>
<feature type="short sequence motif" description="DEAH box">
    <location>
        <begin position="559"/>
        <end position="562"/>
    </location>
</feature>
<feature type="compositionally biased region" description="Basic and acidic residues" evidence="6">
    <location>
        <begin position="1"/>
        <end position="10"/>
    </location>
</feature>
<feature type="compositionally biased region" description="Acidic residues" evidence="6">
    <location>
        <begin position="188"/>
        <end position="199"/>
    </location>
</feature>
<feature type="binding site" evidence="4">
    <location>
        <begin position="457"/>
        <end position="464"/>
    </location>
    <ligand>
        <name>ATP</name>
        <dbReference type="ChEBI" id="CHEBI:30616"/>
    </ligand>
</feature>
<feature type="modified residue" description="Phosphoserine" evidence="2">
    <location>
        <position position="6"/>
    </location>
</feature>
<feature type="modified residue" description="Phosphoserine" evidence="3">
    <location>
        <position position="226"/>
    </location>
</feature>
<feature type="modified residue" description="Phosphoserine" evidence="2">
    <location>
        <position position="380"/>
    </location>
</feature>
<feature type="splice variant" id="VSP_019748" description="In isoform 2." evidence="7">
    <location>
        <begin position="1"/>
        <end position="28"/>
    </location>
</feature>
<feature type="sequence conflict" description="In Ref. 1; CAH90573." evidence="8" ref="1">
    <original>P</original>
    <variation>L</variation>
    <location>
        <position position="170"/>
    </location>
</feature>
<feature type="sequence conflict" description="In Ref. 1; CAH90573." evidence="8" ref="1">
    <original>A</original>
    <variation>T</variation>
    <location>
        <position position="235"/>
    </location>
</feature>
<feature type="sequence conflict" description="In Ref. 1; CAH90573." evidence="8" ref="1">
    <original>V</original>
    <variation>A</variation>
    <location>
        <position position="519"/>
    </location>
</feature>
<feature type="sequence conflict" description="In Ref. 1; CAH90573." evidence="8" ref="1">
    <original>L</original>
    <variation>S</variation>
    <location>
        <position position="652"/>
    </location>
</feature>
<feature type="sequence conflict" description="In Ref. 1; CAH90573." evidence="8" ref="1">
    <original>T</original>
    <variation>I</variation>
    <location>
        <position position="738"/>
    </location>
</feature>
<feature type="sequence conflict" description="In Ref. 1; CAH90573." evidence="8" ref="1">
    <original>E</original>
    <variation>D</variation>
    <location>
        <position position="880"/>
    </location>
</feature>
<reference key="1">
    <citation type="submission" date="2004-11" db="EMBL/GenBank/DDBJ databases">
        <authorList>
            <consortium name="The German cDNA consortium"/>
        </authorList>
    </citation>
    <scope>NUCLEOTIDE SEQUENCE [LARGE SCALE MRNA] (ISOFORMS 1 AND 2)</scope>
    <source>
        <tissue>Brain cortex</tissue>
    </source>
</reference>